<name>SUS6_ORYSJ</name>
<comment type="function">
    <text evidence="1">Sucrose-cleaving enzyme that provides UDP-glucose and fructose for various metabolic pathways.</text>
</comment>
<comment type="catalytic activity">
    <reaction>
        <text>an NDP-alpha-D-glucose + D-fructose = a ribonucleoside 5'-diphosphate + sucrose + H(+)</text>
        <dbReference type="Rhea" id="RHEA:16241"/>
        <dbReference type="ChEBI" id="CHEBI:15378"/>
        <dbReference type="ChEBI" id="CHEBI:17992"/>
        <dbReference type="ChEBI" id="CHEBI:37721"/>
        <dbReference type="ChEBI" id="CHEBI:57930"/>
        <dbReference type="ChEBI" id="CHEBI:76533"/>
        <dbReference type="EC" id="2.4.1.13"/>
    </reaction>
</comment>
<comment type="similarity">
    <text evidence="2">Belongs to the glycosyltransferase 1 family. Plant sucrose synthase subfamily.</text>
</comment>
<dbReference type="EC" id="2.4.1.13"/>
<dbReference type="EMBL" id="HQ895724">
    <property type="protein sequence ID" value="AEX32879.1"/>
    <property type="molecule type" value="mRNA"/>
</dbReference>
<dbReference type="EMBL" id="AP004082">
    <property type="protein sequence ID" value="BAD23005.1"/>
    <property type="molecule type" value="Genomic_DNA"/>
</dbReference>
<dbReference type="EMBL" id="AP008208">
    <property type="protein sequence ID" value="BAF10534.1"/>
    <property type="molecule type" value="Genomic_DNA"/>
</dbReference>
<dbReference type="EMBL" id="AP014958">
    <property type="protein sequence ID" value="BAS81757.1"/>
    <property type="molecule type" value="Genomic_DNA"/>
</dbReference>
<dbReference type="EMBL" id="AK065549">
    <property type="status" value="NOT_ANNOTATED_CDS"/>
    <property type="molecule type" value="mRNA"/>
</dbReference>
<dbReference type="SMR" id="Q6K973"/>
<dbReference type="FunCoup" id="Q6K973">
    <property type="interactions" value="204"/>
</dbReference>
<dbReference type="STRING" id="39947.Q6K973"/>
<dbReference type="CAZy" id="GT4">
    <property type="family name" value="Glycosyltransferase Family 4"/>
</dbReference>
<dbReference type="PaxDb" id="39947-Q6K973"/>
<dbReference type="EnsemblPlants" id="Os02t0831500-01">
    <property type="protein sequence ID" value="Os02t0831500-01"/>
    <property type="gene ID" value="Os02g0831500"/>
</dbReference>
<dbReference type="Gramene" id="Os02t0831500-01">
    <property type="protein sequence ID" value="Os02t0831500-01"/>
    <property type="gene ID" value="Os02g0831500"/>
</dbReference>
<dbReference type="KEGG" id="dosa:Os02g0831500"/>
<dbReference type="eggNOG" id="KOG0853">
    <property type="taxonomic scope" value="Eukaryota"/>
</dbReference>
<dbReference type="HOGENOM" id="CLU_019158_1_0_1"/>
<dbReference type="InParanoid" id="Q6K973"/>
<dbReference type="OMA" id="ERQVCPF"/>
<dbReference type="BRENDA" id="2.4.1.13">
    <property type="organism ID" value="4460"/>
</dbReference>
<dbReference type="PlantReactome" id="R-OSA-1119452">
    <property type="pathway name" value="Galactose degradation II"/>
</dbReference>
<dbReference type="PlantReactome" id="R-OSA-1119465">
    <property type="pathway name" value="Sucrose biosynthesis"/>
</dbReference>
<dbReference type="Proteomes" id="UP000000763">
    <property type="component" value="Chromosome 2"/>
</dbReference>
<dbReference type="Proteomes" id="UP000059680">
    <property type="component" value="Chromosome 2"/>
</dbReference>
<dbReference type="ExpressionAtlas" id="Q6K973">
    <property type="expression patterns" value="baseline and differential"/>
</dbReference>
<dbReference type="GO" id="GO:0016157">
    <property type="term" value="F:sucrose synthase activity"/>
    <property type="evidence" value="ECO:0000318"/>
    <property type="project" value="GO_Central"/>
</dbReference>
<dbReference type="GO" id="GO:0005985">
    <property type="term" value="P:sucrose metabolic process"/>
    <property type="evidence" value="ECO:0007669"/>
    <property type="project" value="InterPro"/>
</dbReference>
<dbReference type="FunFam" id="1.20.120.1230:FF:000001">
    <property type="entry name" value="Sucrose synthase"/>
    <property type="match status" value="1"/>
</dbReference>
<dbReference type="FunFam" id="3.10.450.330:FF:000001">
    <property type="entry name" value="Sucrose synthase"/>
    <property type="match status" value="1"/>
</dbReference>
<dbReference type="FunFam" id="3.40.50.2000:FF:000006">
    <property type="entry name" value="Sucrose synthase"/>
    <property type="match status" value="1"/>
</dbReference>
<dbReference type="Gene3D" id="1.20.120.1230">
    <property type="match status" value="1"/>
</dbReference>
<dbReference type="Gene3D" id="3.10.450.330">
    <property type="match status" value="1"/>
</dbReference>
<dbReference type="Gene3D" id="3.40.50.2000">
    <property type="entry name" value="Glycogen Phosphorylase B"/>
    <property type="match status" value="2"/>
</dbReference>
<dbReference type="InterPro" id="IPR001296">
    <property type="entry name" value="Glyco_trans_1"/>
</dbReference>
<dbReference type="InterPro" id="IPR000368">
    <property type="entry name" value="Sucrose_synth_GT-B1"/>
</dbReference>
<dbReference type="InterPro" id="IPR012820">
    <property type="entry name" value="Sucrose_synthase_pln/cyn"/>
</dbReference>
<dbReference type="InterPro" id="IPR056736">
    <property type="entry name" value="SUS_EPBD"/>
</dbReference>
<dbReference type="InterPro" id="IPR056735">
    <property type="entry name" value="SUS_N"/>
</dbReference>
<dbReference type="NCBIfam" id="TIGR02470">
    <property type="entry name" value="sucr_synth"/>
    <property type="match status" value="1"/>
</dbReference>
<dbReference type="PANTHER" id="PTHR45839">
    <property type="match status" value="1"/>
</dbReference>
<dbReference type="PANTHER" id="PTHR45839:SF16">
    <property type="entry name" value="SUCROSE SYNTHASE 6"/>
    <property type="match status" value="1"/>
</dbReference>
<dbReference type="Pfam" id="PF00534">
    <property type="entry name" value="Glycos_transf_1"/>
    <property type="match status" value="1"/>
</dbReference>
<dbReference type="Pfam" id="PF00862">
    <property type="entry name" value="GT-B_Sucrose_synth"/>
    <property type="match status" value="1"/>
</dbReference>
<dbReference type="Pfam" id="PF24862">
    <property type="entry name" value="SUS_EPBD"/>
    <property type="match status" value="1"/>
</dbReference>
<dbReference type="Pfam" id="PF24861">
    <property type="entry name" value="SUS_N"/>
    <property type="match status" value="1"/>
</dbReference>
<dbReference type="SUPFAM" id="SSF53756">
    <property type="entry name" value="UDP-Glycosyltransferase/glycogen phosphorylase"/>
    <property type="match status" value="1"/>
</dbReference>
<feature type="chain" id="PRO_0000418808" description="Sucrose synthase 6">
    <location>
        <begin position="1"/>
        <end position="846"/>
    </location>
</feature>
<feature type="region of interest" description="GT-B glycosyltransferase" evidence="1">
    <location>
        <begin position="276"/>
        <end position="755"/>
    </location>
</feature>
<feature type="sequence conflict" description="In Ref. 5; AK065549." evidence="2" ref="5">
    <original>L</original>
    <variation>M</variation>
    <location>
        <position position="123"/>
    </location>
</feature>
<feature type="sequence conflict" description="In Ref. 5; AK065549." evidence="2" ref="5">
    <original>D</original>
    <variation>G</variation>
    <location>
        <position position="476"/>
    </location>
</feature>
<evidence type="ECO:0000250" key="1"/>
<evidence type="ECO:0000305" key="2"/>
<accession>Q6K973</accession>
<accession>A0A0P0VRX7</accession>
<organism>
    <name type="scientific">Oryza sativa subsp. japonica</name>
    <name type="common">Rice</name>
    <dbReference type="NCBI Taxonomy" id="39947"/>
    <lineage>
        <taxon>Eukaryota</taxon>
        <taxon>Viridiplantae</taxon>
        <taxon>Streptophyta</taxon>
        <taxon>Embryophyta</taxon>
        <taxon>Tracheophyta</taxon>
        <taxon>Spermatophyta</taxon>
        <taxon>Magnoliopsida</taxon>
        <taxon>Liliopsida</taxon>
        <taxon>Poales</taxon>
        <taxon>Poaceae</taxon>
        <taxon>BOP clade</taxon>
        <taxon>Oryzoideae</taxon>
        <taxon>Oryzeae</taxon>
        <taxon>Oryzinae</taxon>
        <taxon>Oryza</taxon>
        <taxon>Oryza sativa</taxon>
    </lineage>
</organism>
<sequence length="846" mass="96153">MAVGLRRSDSIADMMPEALRQSRYQMKRCFQRYVSQGKRLMKRQQLLDELDKSVDDKADKDQLLQGFLGYVISSTQEAAVLPPFVAFAVRMNPGIWEFVKVHSANLSVEQMTPSDYLKNKEALVDDKWGAYDDDSQLEVDFGALDLSTPHLTLPSSIGKGAHLVSRFMSSKLTDNKKPLLDYLLALSHRGDKLMINDILDTVDKLQTALLLAEVYVAGLHPDTNYSEFEQKFQEWGLEKGWGDTAETCKETLSSLSEVLQAPDPINMEKFFSTVPCVFTVVIFSIHGYFGQEKVLGMPDTGGQVVYILDQVRALEDELLQRIKQQGLNATPKILVLTRLIPEAKGTKCNVELEPIENTKHSNILRVPFKTEDGKVLPQWVSRFDIYPYLERYAQDSSVKILEILEGKPDLVIGNYTDGNLVASLLTSKLGVTQGTIAHALEKTKYEDSDIKWRELDHKYHFSCQFTADMIAMNTSDFIIASTYQEIAGSKEKPGQYESHYAFTMPGLCRYATGINVFDPKFNIAAPGADQSVYFPFTQKQKRLTDLHPQIEELLYSKEDNNEHIGHLADRSKPIIFSMARLDKIKNITGLVEWYGQNKRLRDLVNLVIVGGLLDPSQSKDREEIEEINKMHSLINKYQLVGQIRWIKGQTDRVRNGELYRCIADTKGAFVQPALYEAFGLTVIEAMNCGLPTFATNQGGPAEIIVDEVSGFHINPLNGKEASDKIADFFQKCKEDLIYWSKMSTAGLQRIYECYTWQIYATKVLNMASIYGFWRTLDKEERQAKQHYLHMFYNLQFRKLAKNVPTLGEQPAQPTESAEPNRIIPRPKERQVCPFLRNLLKKETGNN</sequence>
<protein>
    <recommendedName>
        <fullName>Sucrose synthase 6</fullName>
        <shortName>OsSUS6</shortName>
        <ecNumber>2.4.1.13</ecNumber>
    </recommendedName>
    <alternativeName>
        <fullName>Sucrose-UDP glucosyltransferase 6</fullName>
    </alternativeName>
</protein>
<gene>
    <name type="primary">SUS6</name>
    <name type="ordered locus">Os02g0831500</name>
    <name type="ordered locus">LOC_Os02g58480</name>
    <name type="ORF">OJ1149_C12.12-1</name>
</gene>
<reference key="1">
    <citation type="journal article" date="2011" name="Mol. Cells">
        <title>Identification and characterization of the duplicate rice sucrose synthase genes OsSUS5 and OsSUS7 which are associated with the plasma membrane.</title>
        <authorList>
            <person name="Cho J.I."/>
            <person name="Kim H.B."/>
            <person name="Kim C.Y."/>
            <person name="Hahn T.R."/>
            <person name="Jeon J.S."/>
        </authorList>
    </citation>
    <scope>NUCLEOTIDE SEQUENCE [MRNA]</scope>
    <scope>GENE FAMILY</scope>
    <source>
        <strain>cv. Nipponbare</strain>
    </source>
</reference>
<reference key="2">
    <citation type="journal article" date="2005" name="Nature">
        <title>The map-based sequence of the rice genome.</title>
        <authorList>
            <consortium name="International rice genome sequencing project (IRGSP)"/>
        </authorList>
    </citation>
    <scope>NUCLEOTIDE SEQUENCE [LARGE SCALE GENOMIC DNA]</scope>
    <source>
        <strain>cv. Nipponbare</strain>
    </source>
</reference>
<reference key="3">
    <citation type="journal article" date="2008" name="Nucleic Acids Res.">
        <title>The rice annotation project database (RAP-DB): 2008 update.</title>
        <authorList>
            <consortium name="The rice annotation project (RAP)"/>
        </authorList>
    </citation>
    <scope>GENOME REANNOTATION</scope>
    <source>
        <strain>cv. Nipponbare</strain>
    </source>
</reference>
<reference key="4">
    <citation type="journal article" date="2013" name="Rice">
        <title>Improvement of the Oryza sativa Nipponbare reference genome using next generation sequence and optical map data.</title>
        <authorList>
            <person name="Kawahara Y."/>
            <person name="de la Bastide M."/>
            <person name="Hamilton J.P."/>
            <person name="Kanamori H."/>
            <person name="McCombie W.R."/>
            <person name="Ouyang S."/>
            <person name="Schwartz D.C."/>
            <person name="Tanaka T."/>
            <person name="Wu J."/>
            <person name="Zhou S."/>
            <person name="Childs K.L."/>
            <person name="Davidson R.M."/>
            <person name="Lin H."/>
            <person name="Quesada-Ocampo L."/>
            <person name="Vaillancourt B."/>
            <person name="Sakai H."/>
            <person name="Lee S.S."/>
            <person name="Kim J."/>
            <person name="Numa H."/>
            <person name="Itoh T."/>
            <person name="Buell C.R."/>
            <person name="Matsumoto T."/>
        </authorList>
    </citation>
    <scope>GENOME REANNOTATION</scope>
    <source>
        <strain>cv. Nipponbare</strain>
    </source>
</reference>
<reference key="5">
    <citation type="journal article" date="2003" name="Science">
        <title>Collection, mapping, and annotation of over 28,000 cDNA clones from japonica rice.</title>
        <authorList>
            <consortium name="The rice full-length cDNA consortium"/>
        </authorList>
    </citation>
    <scope>NUCLEOTIDE SEQUENCE [LARGE SCALE MRNA]</scope>
    <source>
        <strain>cv. Nipponbare</strain>
    </source>
</reference>
<reference key="6">
    <citation type="journal article" date="2008" name="Plant Sci.">
        <title>An expression analysis profile for the entire sucrose synthase gene family in rice.</title>
        <authorList>
            <person name="Hirose T."/>
            <person name="Scofield G.N."/>
            <person name="Terao T."/>
        </authorList>
    </citation>
    <scope>GENE FAMILY</scope>
</reference>
<proteinExistence type="evidence at transcript level"/>
<keyword id="KW-0328">Glycosyltransferase</keyword>
<keyword id="KW-1185">Reference proteome</keyword>
<keyword id="KW-0808">Transferase</keyword>